<accession>A8GJY0</accession>
<evidence type="ECO:0000255" key="1">
    <source>
        <dbReference type="HAMAP-Rule" id="MF_00904"/>
    </source>
</evidence>
<feature type="chain" id="PRO_0000413195" description="Modulator protein MzrA">
    <location>
        <begin position="1"/>
        <end position="123"/>
    </location>
</feature>
<feature type="topological domain" description="Cytoplasmic" evidence="1">
    <location>
        <begin position="1"/>
        <end position="8"/>
    </location>
</feature>
<feature type="transmembrane region" description="Helical" evidence="1">
    <location>
        <begin position="9"/>
        <end position="29"/>
    </location>
</feature>
<feature type="topological domain" description="Periplasmic" evidence="1">
    <location>
        <begin position="30"/>
        <end position="123"/>
    </location>
</feature>
<proteinExistence type="inferred from homology"/>
<protein>
    <recommendedName>
        <fullName evidence="1">Modulator protein MzrA</fullName>
    </recommendedName>
</protein>
<reference key="1">
    <citation type="submission" date="2007-09" db="EMBL/GenBank/DDBJ databases">
        <title>Complete sequence of chromosome of Serratia proteamaculans 568.</title>
        <authorList>
            <consortium name="US DOE Joint Genome Institute"/>
            <person name="Copeland A."/>
            <person name="Lucas S."/>
            <person name="Lapidus A."/>
            <person name="Barry K."/>
            <person name="Glavina del Rio T."/>
            <person name="Dalin E."/>
            <person name="Tice H."/>
            <person name="Pitluck S."/>
            <person name="Chain P."/>
            <person name="Malfatti S."/>
            <person name="Shin M."/>
            <person name="Vergez L."/>
            <person name="Schmutz J."/>
            <person name="Larimer F."/>
            <person name="Land M."/>
            <person name="Hauser L."/>
            <person name="Kyrpides N."/>
            <person name="Kim E."/>
            <person name="Taghavi S."/>
            <person name="Newman L."/>
            <person name="Vangronsveld J."/>
            <person name="van der Lelie D."/>
            <person name="Richardson P."/>
        </authorList>
    </citation>
    <scope>NUCLEOTIDE SEQUENCE [LARGE SCALE GENOMIC DNA]</scope>
    <source>
        <strain>568</strain>
    </source>
</reference>
<organism>
    <name type="scientific">Serratia proteamaculans (strain 568)</name>
    <dbReference type="NCBI Taxonomy" id="399741"/>
    <lineage>
        <taxon>Bacteria</taxon>
        <taxon>Pseudomonadati</taxon>
        <taxon>Pseudomonadota</taxon>
        <taxon>Gammaproteobacteria</taxon>
        <taxon>Enterobacterales</taxon>
        <taxon>Yersiniaceae</taxon>
        <taxon>Serratia</taxon>
    </lineage>
</organism>
<sequence>MIKRPRWQYVLLIALALLALATLLVPCMVRTESELRIRAGQQGLSLPDGFYVYQRLDQRGIRIKSITPEGDGLVIRLDSPEQQLLAREALQNILPPGYIIALSESPVPTHWVREFARAPLNLG</sequence>
<keyword id="KW-0997">Cell inner membrane</keyword>
<keyword id="KW-1003">Cell membrane</keyword>
<keyword id="KW-0472">Membrane</keyword>
<keyword id="KW-0812">Transmembrane</keyword>
<keyword id="KW-1133">Transmembrane helix</keyword>
<name>MZRA_SERP5</name>
<dbReference type="EMBL" id="CP000826">
    <property type="protein sequence ID" value="ABV43420.1"/>
    <property type="molecule type" value="Genomic_DNA"/>
</dbReference>
<dbReference type="SMR" id="A8GJY0"/>
<dbReference type="STRING" id="399741.Spro_4326"/>
<dbReference type="KEGG" id="spe:Spro_4326"/>
<dbReference type="eggNOG" id="COG0342">
    <property type="taxonomic scope" value="Bacteria"/>
</dbReference>
<dbReference type="HOGENOM" id="CLU_153761_1_0_6"/>
<dbReference type="OrthoDB" id="6414235at2"/>
<dbReference type="GO" id="GO:0005886">
    <property type="term" value="C:plasma membrane"/>
    <property type="evidence" value="ECO:0007669"/>
    <property type="project" value="UniProtKB-SubCell"/>
</dbReference>
<dbReference type="GO" id="GO:0019901">
    <property type="term" value="F:protein kinase binding"/>
    <property type="evidence" value="ECO:0007669"/>
    <property type="project" value="UniProtKB-UniRule"/>
</dbReference>
<dbReference type="Gene3D" id="3.30.70.260">
    <property type="match status" value="1"/>
</dbReference>
<dbReference type="HAMAP" id="MF_00904">
    <property type="entry name" value="Modulator_MzrA"/>
    <property type="match status" value="1"/>
</dbReference>
<dbReference type="InterPro" id="IPR026574">
    <property type="entry name" value="Modulator_MzrA"/>
</dbReference>
<dbReference type="InterPro" id="IPR027398">
    <property type="entry name" value="SecD-TM"/>
</dbReference>
<dbReference type="NCBIfam" id="NF007915">
    <property type="entry name" value="PRK10629.1"/>
    <property type="match status" value="1"/>
</dbReference>
<dbReference type="Pfam" id="PF13721">
    <property type="entry name" value="SecD-TM1"/>
    <property type="match status" value="1"/>
</dbReference>
<comment type="function">
    <text evidence="1">Modulates the activity of the EnvZ/OmpR two-component regulatory system, probably by directly modulating EnvZ enzymatic activity and increasing stability of phosphorylated OmpR.</text>
</comment>
<comment type="subunit">
    <text evidence="1">Interacts with EnvZ.</text>
</comment>
<comment type="subcellular location">
    <subcellularLocation>
        <location evidence="1">Cell inner membrane</location>
        <topology evidence="1">Single-pass membrane protein</topology>
    </subcellularLocation>
</comment>
<comment type="similarity">
    <text evidence="1">Belongs to the MzrA family.</text>
</comment>
<gene>
    <name evidence="1" type="primary">mzrA</name>
    <name type="ordered locus">Spro_4326</name>
</gene>